<sequence>MRGFRPLLSLLLPLSACFPLLDRRGPTDIGDIGARMNWAQLAEGHPPNSVQNPQPQALLVVAREQQASHREHTGFRLGRQDGSSEAAGFLPADSEKASGPLGTLAEELSSYSRRKGGFSFRFGR</sequence>
<gene>
    <name evidence="9" type="primary">Qrfp</name>
</gene>
<dbReference type="EMBL" id="AB109628">
    <property type="protein sequence ID" value="BAC98937.1"/>
    <property type="molecule type" value="mRNA"/>
</dbReference>
<dbReference type="EMBL" id="AK029144">
    <property type="protein sequence ID" value="BAC26323.1"/>
    <property type="molecule type" value="mRNA"/>
</dbReference>
<dbReference type="EMBL" id="AL929275">
    <property type="status" value="NOT_ANNOTATED_CDS"/>
    <property type="molecule type" value="Genomic_DNA"/>
</dbReference>
<dbReference type="CCDS" id="CCDS15902.1"/>
<dbReference type="RefSeq" id="NP_906269.1">
    <property type="nucleotide sequence ID" value="NM_183424.4"/>
</dbReference>
<dbReference type="PDB" id="8WZ2">
    <property type="method" value="EM"/>
    <property type="resolution" value="2.73 A"/>
    <property type="chains" value="L=97-123"/>
</dbReference>
<dbReference type="PDBsum" id="8WZ2"/>
<dbReference type="EMDB" id="EMD-37944"/>
<dbReference type="SMR" id="Q8CE23"/>
<dbReference type="FunCoup" id="Q8CE23">
    <property type="interactions" value="385"/>
</dbReference>
<dbReference type="STRING" id="10090.ENSMUSP00000055746"/>
<dbReference type="PaxDb" id="10090-ENSMUSP00000055746"/>
<dbReference type="Antibodypedia" id="48446">
    <property type="antibodies" value="22 antibodies from 6 providers"/>
</dbReference>
<dbReference type="DNASU" id="227717"/>
<dbReference type="Ensembl" id="ENSMUST00000057407.3">
    <property type="protein sequence ID" value="ENSMUSP00000055746.3"/>
    <property type="gene ID" value="ENSMUSG00000043102.3"/>
</dbReference>
<dbReference type="GeneID" id="227717"/>
<dbReference type="KEGG" id="mmu:227717"/>
<dbReference type="UCSC" id="uc008jed.1">
    <property type="organism name" value="mouse"/>
</dbReference>
<dbReference type="AGR" id="MGI:3630329"/>
<dbReference type="CTD" id="347148"/>
<dbReference type="MGI" id="MGI:3630329">
    <property type="gene designation" value="Qrfp"/>
</dbReference>
<dbReference type="VEuPathDB" id="HostDB:ENSMUSG00000043102"/>
<dbReference type="eggNOG" id="ENOG502S84J">
    <property type="taxonomic scope" value="Eukaryota"/>
</dbReference>
<dbReference type="GeneTree" id="ENSGT00390000015756"/>
<dbReference type="HOGENOM" id="CLU_155319_0_0_1"/>
<dbReference type="InParanoid" id="Q8CE23"/>
<dbReference type="OMA" id="TGREMSW"/>
<dbReference type="OrthoDB" id="9831857at2759"/>
<dbReference type="PhylomeDB" id="Q8CE23"/>
<dbReference type="TreeFam" id="TF336317"/>
<dbReference type="Reactome" id="R-MMU-389397">
    <property type="pathway name" value="Orexin and neuropeptides FF and QRFP bind to their respective receptors"/>
</dbReference>
<dbReference type="Reactome" id="R-MMU-416476">
    <property type="pathway name" value="G alpha (q) signalling events"/>
</dbReference>
<dbReference type="BioGRID-ORCS" id="227717">
    <property type="hits" value="4 hits in 77 CRISPR screens"/>
</dbReference>
<dbReference type="PRO" id="PR:Q8CE23"/>
<dbReference type="Proteomes" id="UP000000589">
    <property type="component" value="Chromosome 2"/>
</dbReference>
<dbReference type="RNAct" id="Q8CE23">
    <property type="molecule type" value="protein"/>
</dbReference>
<dbReference type="Bgee" id="ENSMUSG00000043102">
    <property type="expression patterns" value="Expressed in mesodermal cell in embryo and 13 other cell types or tissues"/>
</dbReference>
<dbReference type="GO" id="GO:0005576">
    <property type="term" value="C:extracellular region"/>
    <property type="evidence" value="ECO:0007669"/>
    <property type="project" value="UniProtKB-SubCell"/>
</dbReference>
<dbReference type="GO" id="GO:0005184">
    <property type="term" value="F:neuropeptide hormone activity"/>
    <property type="evidence" value="ECO:0000250"/>
    <property type="project" value="UniProtKB"/>
</dbReference>
<dbReference type="GO" id="GO:0031854">
    <property type="term" value="F:orexigenic neuropeptide QRFP receptor binding"/>
    <property type="evidence" value="ECO:0000314"/>
    <property type="project" value="UniProtKB"/>
</dbReference>
<dbReference type="GO" id="GO:0007625">
    <property type="term" value="P:grooming behavior"/>
    <property type="evidence" value="ECO:0000314"/>
    <property type="project" value="UniProtKB"/>
</dbReference>
<dbReference type="GO" id="GO:0007626">
    <property type="term" value="P:locomotory behavior"/>
    <property type="evidence" value="ECO:0000314"/>
    <property type="project" value="UniProtKB"/>
</dbReference>
<dbReference type="GO" id="GO:0007218">
    <property type="term" value="P:neuropeptide signaling pathway"/>
    <property type="evidence" value="ECO:0000250"/>
    <property type="project" value="UniProtKB"/>
</dbReference>
<dbReference type="GO" id="GO:0045777">
    <property type="term" value="P:positive regulation of blood pressure"/>
    <property type="evidence" value="ECO:0000314"/>
    <property type="project" value="UniProtKB"/>
</dbReference>
<dbReference type="GO" id="GO:0060259">
    <property type="term" value="P:regulation of feeding behavior"/>
    <property type="evidence" value="ECO:0000314"/>
    <property type="project" value="UniProtKB"/>
</dbReference>
<dbReference type="InterPro" id="IPR024565">
    <property type="entry name" value="P518"/>
</dbReference>
<dbReference type="PANTHER" id="PTHR36476">
    <property type="entry name" value="OREXIGENIC NEUROPEPTIDE QRFP"/>
    <property type="match status" value="1"/>
</dbReference>
<dbReference type="PANTHER" id="PTHR36476:SF1">
    <property type="entry name" value="OREXIGENIC NEUROPEPTIDE QRFP"/>
    <property type="match status" value="1"/>
</dbReference>
<dbReference type="Pfam" id="PF11109">
    <property type="entry name" value="RFamide_26RFa"/>
    <property type="match status" value="1"/>
</dbReference>
<proteinExistence type="evidence at protein level"/>
<evidence type="ECO:0000250" key="1"/>
<evidence type="ECO:0000255" key="2"/>
<evidence type="ECO:0000256" key="3">
    <source>
        <dbReference type="SAM" id="MobiDB-lite"/>
    </source>
</evidence>
<evidence type="ECO:0000269" key="4">
    <source>
    </source>
</evidence>
<evidence type="ECO:0000269" key="5">
    <source>
    </source>
</evidence>
<evidence type="ECO:0000269" key="6">
    <source>
    </source>
</evidence>
<evidence type="ECO:0000305" key="7"/>
<evidence type="ECO:0000312" key="8">
    <source>
        <dbReference type="EMBL" id="BAC26323.1"/>
    </source>
</evidence>
<evidence type="ECO:0000312" key="9">
    <source>
        <dbReference type="EMBL" id="BAC98937.1"/>
    </source>
</evidence>
<evidence type="ECO:0007829" key="10">
    <source>
        <dbReference type="PDB" id="8WZ2"/>
    </source>
</evidence>
<protein>
    <recommendedName>
        <fullName>Orexigenic neuropeptide QRFP</fullName>
    </recommendedName>
    <alternativeName>
        <fullName>P518</fullName>
    </alternativeName>
    <component>
        <recommendedName>
            <fullName>QRF-amide</fullName>
        </recommendedName>
        <alternativeName>
            <fullName>Neuropeptide RF-amide</fullName>
        </alternativeName>
        <alternativeName>
            <fullName>Pyroglutamylated arginine-phenylalanine-amide peptide</fullName>
        </alternativeName>
    </component>
</protein>
<name>OX26_MOUSE</name>
<organism evidence="8">
    <name type="scientific">Mus musculus</name>
    <name type="common">Mouse</name>
    <dbReference type="NCBI Taxonomy" id="10090"/>
    <lineage>
        <taxon>Eukaryota</taxon>
        <taxon>Metazoa</taxon>
        <taxon>Chordata</taxon>
        <taxon>Craniata</taxon>
        <taxon>Vertebrata</taxon>
        <taxon>Euteleostomi</taxon>
        <taxon>Mammalia</taxon>
        <taxon>Eutheria</taxon>
        <taxon>Euarchontoglires</taxon>
        <taxon>Glires</taxon>
        <taxon>Rodentia</taxon>
        <taxon>Myomorpha</taxon>
        <taxon>Muroidea</taxon>
        <taxon>Muridae</taxon>
        <taxon>Murinae</taxon>
        <taxon>Mus</taxon>
        <taxon>Mus</taxon>
    </lineage>
</organism>
<keyword id="KW-0002">3D-structure</keyword>
<keyword id="KW-0027">Amidation</keyword>
<keyword id="KW-0527">Neuropeptide</keyword>
<keyword id="KW-1185">Reference proteome</keyword>
<keyword id="KW-0964">Secreted</keyword>
<keyword id="KW-0732">Signal</keyword>
<accession>Q8CE23</accession>
<accession>A2AV24</accession>
<reference evidence="7" key="1">
    <citation type="journal article" date="2003" name="J. Biol. Chem.">
        <title>Identification and characterization of a novel RF-amide peptide ligand for orphan G-protein-coupled receptor SP9155.</title>
        <authorList>
            <person name="Jiang Y."/>
            <person name="Luo L."/>
            <person name="Gustafson E.L."/>
            <person name="Yadav D."/>
            <person name="Laverty M."/>
            <person name="Murgolo N."/>
            <person name="Vassileva G."/>
            <person name="Zeng M."/>
            <person name="Laz T.M."/>
            <person name="Behan J."/>
            <person name="Qiu P."/>
            <person name="Wang L."/>
            <person name="Wang S."/>
            <person name="Bayne M."/>
            <person name="Greene J."/>
            <person name="Monsma F.J. Jr."/>
            <person name="Zhang F.L."/>
        </authorList>
    </citation>
    <scope>NUCLEOTIDE SEQUENCE [MRNA]</scope>
    <scope>TISSUE SPECIFICITY</scope>
</reference>
<reference evidence="9" key="2">
    <citation type="journal article" date="2003" name="J. Biol. Chem.">
        <title>A new peptidic ligand and its receptor regulating adrenal function in rats.</title>
        <authorList>
            <person name="Fukusumi S."/>
            <person name="Yoshida H."/>
            <person name="Fujii R."/>
            <person name="Maruyama M."/>
            <person name="Komatsu H."/>
            <person name="Habata Y."/>
            <person name="Shintani Y."/>
            <person name="Hinuma S."/>
            <person name="Fujino M."/>
        </authorList>
    </citation>
    <scope>NUCLEOTIDE SEQUENCE [MRNA]</scope>
    <source>
        <tissue evidence="5">Brain</tissue>
    </source>
</reference>
<reference key="3">
    <citation type="journal article" date="2005" name="Science">
        <title>The transcriptional landscape of the mammalian genome.</title>
        <authorList>
            <person name="Carninci P."/>
            <person name="Kasukawa T."/>
            <person name="Katayama S."/>
            <person name="Gough J."/>
            <person name="Frith M.C."/>
            <person name="Maeda N."/>
            <person name="Oyama R."/>
            <person name="Ravasi T."/>
            <person name="Lenhard B."/>
            <person name="Wells C."/>
            <person name="Kodzius R."/>
            <person name="Shimokawa K."/>
            <person name="Bajic V.B."/>
            <person name="Brenner S.E."/>
            <person name="Batalov S."/>
            <person name="Forrest A.R."/>
            <person name="Zavolan M."/>
            <person name="Davis M.J."/>
            <person name="Wilming L.G."/>
            <person name="Aidinis V."/>
            <person name="Allen J.E."/>
            <person name="Ambesi-Impiombato A."/>
            <person name="Apweiler R."/>
            <person name="Aturaliya R.N."/>
            <person name="Bailey T.L."/>
            <person name="Bansal M."/>
            <person name="Baxter L."/>
            <person name="Beisel K.W."/>
            <person name="Bersano T."/>
            <person name="Bono H."/>
            <person name="Chalk A.M."/>
            <person name="Chiu K.P."/>
            <person name="Choudhary V."/>
            <person name="Christoffels A."/>
            <person name="Clutterbuck D.R."/>
            <person name="Crowe M.L."/>
            <person name="Dalla E."/>
            <person name="Dalrymple B.P."/>
            <person name="de Bono B."/>
            <person name="Della Gatta G."/>
            <person name="di Bernardo D."/>
            <person name="Down T."/>
            <person name="Engstrom P."/>
            <person name="Fagiolini M."/>
            <person name="Faulkner G."/>
            <person name="Fletcher C.F."/>
            <person name="Fukushima T."/>
            <person name="Furuno M."/>
            <person name="Futaki S."/>
            <person name="Gariboldi M."/>
            <person name="Georgii-Hemming P."/>
            <person name="Gingeras T.R."/>
            <person name="Gojobori T."/>
            <person name="Green R.E."/>
            <person name="Gustincich S."/>
            <person name="Harbers M."/>
            <person name="Hayashi Y."/>
            <person name="Hensch T.K."/>
            <person name="Hirokawa N."/>
            <person name="Hill D."/>
            <person name="Huminiecki L."/>
            <person name="Iacono M."/>
            <person name="Ikeo K."/>
            <person name="Iwama A."/>
            <person name="Ishikawa T."/>
            <person name="Jakt M."/>
            <person name="Kanapin A."/>
            <person name="Katoh M."/>
            <person name="Kawasawa Y."/>
            <person name="Kelso J."/>
            <person name="Kitamura H."/>
            <person name="Kitano H."/>
            <person name="Kollias G."/>
            <person name="Krishnan S.P."/>
            <person name="Kruger A."/>
            <person name="Kummerfeld S.K."/>
            <person name="Kurochkin I.V."/>
            <person name="Lareau L.F."/>
            <person name="Lazarevic D."/>
            <person name="Lipovich L."/>
            <person name="Liu J."/>
            <person name="Liuni S."/>
            <person name="McWilliam S."/>
            <person name="Madan Babu M."/>
            <person name="Madera M."/>
            <person name="Marchionni L."/>
            <person name="Matsuda H."/>
            <person name="Matsuzawa S."/>
            <person name="Miki H."/>
            <person name="Mignone F."/>
            <person name="Miyake S."/>
            <person name="Morris K."/>
            <person name="Mottagui-Tabar S."/>
            <person name="Mulder N."/>
            <person name="Nakano N."/>
            <person name="Nakauchi H."/>
            <person name="Ng P."/>
            <person name="Nilsson R."/>
            <person name="Nishiguchi S."/>
            <person name="Nishikawa S."/>
            <person name="Nori F."/>
            <person name="Ohara O."/>
            <person name="Okazaki Y."/>
            <person name="Orlando V."/>
            <person name="Pang K.C."/>
            <person name="Pavan W.J."/>
            <person name="Pavesi G."/>
            <person name="Pesole G."/>
            <person name="Petrovsky N."/>
            <person name="Piazza S."/>
            <person name="Reed J."/>
            <person name="Reid J.F."/>
            <person name="Ring B.Z."/>
            <person name="Ringwald M."/>
            <person name="Rost B."/>
            <person name="Ruan Y."/>
            <person name="Salzberg S.L."/>
            <person name="Sandelin A."/>
            <person name="Schneider C."/>
            <person name="Schoenbach C."/>
            <person name="Sekiguchi K."/>
            <person name="Semple C.A."/>
            <person name="Seno S."/>
            <person name="Sessa L."/>
            <person name="Sheng Y."/>
            <person name="Shibata Y."/>
            <person name="Shimada H."/>
            <person name="Shimada K."/>
            <person name="Silva D."/>
            <person name="Sinclair B."/>
            <person name="Sperling S."/>
            <person name="Stupka E."/>
            <person name="Sugiura K."/>
            <person name="Sultana R."/>
            <person name="Takenaka Y."/>
            <person name="Taki K."/>
            <person name="Tammoja K."/>
            <person name="Tan S.L."/>
            <person name="Tang S."/>
            <person name="Taylor M.S."/>
            <person name="Tegner J."/>
            <person name="Teichmann S.A."/>
            <person name="Ueda H.R."/>
            <person name="van Nimwegen E."/>
            <person name="Verardo R."/>
            <person name="Wei C.L."/>
            <person name="Yagi K."/>
            <person name="Yamanishi H."/>
            <person name="Zabarovsky E."/>
            <person name="Zhu S."/>
            <person name="Zimmer A."/>
            <person name="Hide W."/>
            <person name="Bult C."/>
            <person name="Grimmond S.M."/>
            <person name="Teasdale R.D."/>
            <person name="Liu E.T."/>
            <person name="Brusic V."/>
            <person name="Quackenbush J."/>
            <person name="Wahlestedt C."/>
            <person name="Mattick J.S."/>
            <person name="Hume D.A."/>
            <person name="Kai C."/>
            <person name="Sasaki D."/>
            <person name="Tomaru Y."/>
            <person name="Fukuda S."/>
            <person name="Kanamori-Katayama M."/>
            <person name="Suzuki M."/>
            <person name="Aoki J."/>
            <person name="Arakawa T."/>
            <person name="Iida J."/>
            <person name="Imamura K."/>
            <person name="Itoh M."/>
            <person name="Kato T."/>
            <person name="Kawaji H."/>
            <person name="Kawagashira N."/>
            <person name="Kawashima T."/>
            <person name="Kojima M."/>
            <person name="Kondo S."/>
            <person name="Konno H."/>
            <person name="Nakano K."/>
            <person name="Ninomiya N."/>
            <person name="Nishio T."/>
            <person name="Okada M."/>
            <person name="Plessy C."/>
            <person name="Shibata K."/>
            <person name="Shiraki T."/>
            <person name="Suzuki S."/>
            <person name="Tagami M."/>
            <person name="Waki K."/>
            <person name="Watahiki A."/>
            <person name="Okamura-Oho Y."/>
            <person name="Suzuki H."/>
            <person name="Kawai J."/>
            <person name="Hayashizaki Y."/>
        </authorList>
    </citation>
    <scope>NUCLEOTIDE SEQUENCE [LARGE SCALE MRNA]</scope>
    <source>
        <strain>C57BL/6J</strain>
        <tissue>Skin</tissue>
    </source>
</reference>
<reference key="4">
    <citation type="journal article" date="2009" name="PLoS Biol.">
        <title>Lineage-specific biology revealed by a finished genome assembly of the mouse.</title>
        <authorList>
            <person name="Church D.M."/>
            <person name="Goodstadt L."/>
            <person name="Hillier L.W."/>
            <person name="Zody M.C."/>
            <person name="Goldstein S."/>
            <person name="She X."/>
            <person name="Bult C.J."/>
            <person name="Agarwala R."/>
            <person name="Cherry J.L."/>
            <person name="DiCuccio M."/>
            <person name="Hlavina W."/>
            <person name="Kapustin Y."/>
            <person name="Meric P."/>
            <person name="Maglott D."/>
            <person name="Birtle Z."/>
            <person name="Marques A.C."/>
            <person name="Graves T."/>
            <person name="Zhou S."/>
            <person name="Teague B."/>
            <person name="Potamousis K."/>
            <person name="Churas C."/>
            <person name="Place M."/>
            <person name="Herschleb J."/>
            <person name="Runnheim R."/>
            <person name="Forrest D."/>
            <person name="Amos-Landgraf J."/>
            <person name="Schwartz D.C."/>
            <person name="Cheng Z."/>
            <person name="Lindblad-Toh K."/>
            <person name="Eichler E.E."/>
            <person name="Ponting C.P."/>
        </authorList>
    </citation>
    <scope>NUCLEOTIDE SEQUENCE [LARGE SCALE GENOMIC DNA]</scope>
    <source>
        <strain>C57BL/6J</strain>
    </source>
</reference>
<reference key="5">
    <citation type="journal article" date="2006" name="Proc. Natl. Acad. Sci. U.S.A.">
        <title>A neuropeptide ligand of the G protein-coupled receptor GPR103 regulates feeding, behavioral arousal, and blood pressure in mice.</title>
        <authorList>
            <person name="Takayasu S."/>
            <person name="Sakurai T."/>
            <person name="Iwasaki S."/>
            <person name="Teranishi H."/>
            <person name="Yamanaka A."/>
            <person name="Williams S.C."/>
            <person name="Iguchi H."/>
            <person name="Kawasawa Y.I."/>
            <person name="Ikeda Y."/>
            <person name="Sakakibara I."/>
            <person name="Ohno K."/>
            <person name="Ioka R.X."/>
            <person name="Murakami S."/>
            <person name="Dohmae N."/>
            <person name="Xie J."/>
            <person name="Suda T."/>
            <person name="Motoike T."/>
            <person name="Ohuchi T."/>
            <person name="Yanagisawa M."/>
            <person name="Sakai J."/>
        </authorList>
    </citation>
    <scope>FUNCTION</scope>
    <scope>TISSUE SPECIFICITY</scope>
</reference>
<feature type="signal peptide" evidence="2">
    <location>
        <begin position="1"/>
        <end position="17"/>
    </location>
</feature>
<feature type="propeptide" id="PRO_0000010088" evidence="1">
    <location>
        <begin position="18"/>
        <end position="79"/>
    </location>
</feature>
<feature type="peptide" id="PRO_0000010089" description="QRF-amide" evidence="7">
    <location>
        <begin position="80"/>
        <end position="122"/>
    </location>
</feature>
<feature type="region of interest" description="Disordered" evidence="3">
    <location>
        <begin position="63"/>
        <end position="101"/>
    </location>
</feature>
<feature type="modified residue" description="Phenylalanine amide" evidence="1">
    <location>
        <position position="122"/>
    </location>
</feature>
<feature type="helix" evidence="10">
    <location>
        <begin position="99"/>
        <end position="110"/>
    </location>
</feature>
<comment type="function">
    <text evidence="6">Stimulates feeding and grooming behavior, metabolic rate and locomotor activity and increases blood pressure. May have orexigenic activity. May promote aldosterone secretion by the adrenal gland.</text>
</comment>
<comment type="subunit">
    <text>Ligand for the G-protein coupled receptor QRFPR/GPR103.</text>
</comment>
<comment type="subcellular location">
    <subcellularLocation>
        <location>Secreted</location>
    </subcellularLocation>
</comment>
<comment type="tissue specificity">
    <text evidence="4 6">Expressed in the brain with highest levels in the periventricular hypothalamic nucleus and lateral hypothalamic areas. Expressed at moderate levels in the adrenal gland, eye, heart, intestine, liver, lung, kidney, mesenteric lymph node, ovary, placenta, Peyer patches, skin, spleen, stomach, testis, thymus and uterus.</text>
</comment>
<comment type="similarity">
    <text evidence="7">Belongs to the RFamide neuropeptide family.</text>
</comment>